<proteinExistence type="inferred from homology"/>
<organism>
    <name type="scientific">Leifsonia xyli subsp. xyli (strain CTCB07)</name>
    <dbReference type="NCBI Taxonomy" id="281090"/>
    <lineage>
        <taxon>Bacteria</taxon>
        <taxon>Bacillati</taxon>
        <taxon>Actinomycetota</taxon>
        <taxon>Actinomycetes</taxon>
        <taxon>Micrococcales</taxon>
        <taxon>Microbacteriaceae</taxon>
        <taxon>Leifsonia</taxon>
    </lineage>
</organism>
<feature type="chain" id="PRO_1000025430" description="Argininosuccinate synthase">
    <location>
        <begin position="1"/>
        <end position="478"/>
    </location>
</feature>
<feature type="binding site" evidence="1">
    <location>
        <begin position="17"/>
        <end position="25"/>
    </location>
    <ligand>
        <name>ATP</name>
        <dbReference type="ChEBI" id="CHEBI:30616"/>
    </ligand>
</feature>
<feature type="binding site" evidence="1">
    <location>
        <position position="43"/>
    </location>
    <ligand>
        <name>ATP</name>
        <dbReference type="ChEBI" id="CHEBI:30616"/>
    </ligand>
</feature>
<feature type="binding site" evidence="1">
    <location>
        <position position="99"/>
    </location>
    <ligand>
        <name>L-citrulline</name>
        <dbReference type="ChEBI" id="CHEBI:57743"/>
    </ligand>
</feature>
<feature type="binding site" evidence="1">
    <location>
        <position position="129"/>
    </location>
    <ligand>
        <name>ATP</name>
        <dbReference type="ChEBI" id="CHEBI:30616"/>
    </ligand>
</feature>
<feature type="binding site" evidence="1">
    <location>
        <position position="131"/>
    </location>
    <ligand>
        <name>ATP</name>
        <dbReference type="ChEBI" id="CHEBI:30616"/>
    </ligand>
</feature>
<feature type="binding site" evidence="1">
    <location>
        <position position="131"/>
    </location>
    <ligand>
        <name>L-aspartate</name>
        <dbReference type="ChEBI" id="CHEBI:29991"/>
    </ligand>
</feature>
<feature type="binding site" evidence="1">
    <location>
        <position position="135"/>
    </location>
    <ligand>
        <name>L-aspartate</name>
        <dbReference type="ChEBI" id="CHEBI:29991"/>
    </ligand>
</feature>
<feature type="binding site" evidence="1">
    <location>
        <position position="135"/>
    </location>
    <ligand>
        <name>L-citrulline</name>
        <dbReference type="ChEBI" id="CHEBI:57743"/>
    </ligand>
</feature>
<feature type="binding site" evidence="1">
    <location>
        <position position="136"/>
    </location>
    <ligand>
        <name>ATP</name>
        <dbReference type="ChEBI" id="CHEBI:30616"/>
    </ligand>
</feature>
<feature type="binding site" evidence="1">
    <location>
        <position position="136"/>
    </location>
    <ligand>
        <name>L-aspartate</name>
        <dbReference type="ChEBI" id="CHEBI:29991"/>
    </ligand>
</feature>
<feature type="binding site" evidence="1">
    <location>
        <position position="139"/>
    </location>
    <ligand>
        <name>L-citrulline</name>
        <dbReference type="ChEBI" id="CHEBI:57743"/>
    </ligand>
</feature>
<feature type="binding site" evidence="1">
    <location>
        <position position="192"/>
    </location>
    <ligand>
        <name>L-citrulline</name>
        <dbReference type="ChEBI" id="CHEBI:57743"/>
    </ligand>
</feature>
<feature type="binding site" evidence="1">
    <location>
        <position position="194"/>
    </location>
    <ligand>
        <name>ATP</name>
        <dbReference type="ChEBI" id="CHEBI:30616"/>
    </ligand>
</feature>
<feature type="binding site" evidence="1">
    <location>
        <position position="201"/>
    </location>
    <ligand>
        <name>L-citrulline</name>
        <dbReference type="ChEBI" id="CHEBI:57743"/>
    </ligand>
</feature>
<feature type="binding site" evidence="1">
    <location>
        <position position="203"/>
    </location>
    <ligand>
        <name>L-citrulline</name>
        <dbReference type="ChEBI" id="CHEBI:57743"/>
    </ligand>
</feature>
<feature type="binding site" evidence="1">
    <location>
        <position position="280"/>
    </location>
    <ligand>
        <name>L-citrulline</name>
        <dbReference type="ChEBI" id="CHEBI:57743"/>
    </ligand>
</feature>
<comment type="catalytic activity">
    <reaction evidence="1">
        <text>L-citrulline + L-aspartate + ATP = 2-(N(omega)-L-arginino)succinate + AMP + diphosphate + H(+)</text>
        <dbReference type="Rhea" id="RHEA:10932"/>
        <dbReference type="ChEBI" id="CHEBI:15378"/>
        <dbReference type="ChEBI" id="CHEBI:29991"/>
        <dbReference type="ChEBI" id="CHEBI:30616"/>
        <dbReference type="ChEBI" id="CHEBI:33019"/>
        <dbReference type="ChEBI" id="CHEBI:57472"/>
        <dbReference type="ChEBI" id="CHEBI:57743"/>
        <dbReference type="ChEBI" id="CHEBI:456215"/>
        <dbReference type="EC" id="6.3.4.5"/>
    </reaction>
</comment>
<comment type="pathway">
    <text evidence="1">Amino-acid biosynthesis; L-arginine biosynthesis; L-arginine from L-ornithine and carbamoyl phosphate: step 2/3.</text>
</comment>
<comment type="subunit">
    <text evidence="1">Homotetramer.</text>
</comment>
<comment type="subcellular location">
    <subcellularLocation>
        <location evidence="1">Cytoplasm</location>
    </subcellularLocation>
</comment>
<comment type="similarity">
    <text evidence="1">Belongs to the argininosuccinate synthase family. Type 2 subfamily.</text>
</comment>
<gene>
    <name evidence="1" type="primary">argG</name>
    <name type="ordered locus">Lxx21970</name>
</gene>
<evidence type="ECO:0000255" key="1">
    <source>
        <dbReference type="HAMAP-Rule" id="MF_00581"/>
    </source>
</evidence>
<accession>Q6ACL1</accession>
<dbReference type="EC" id="6.3.4.5" evidence="1"/>
<dbReference type="EMBL" id="AE016822">
    <property type="protein sequence ID" value="AAT89882.1"/>
    <property type="molecule type" value="Genomic_DNA"/>
</dbReference>
<dbReference type="RefSeq" id="WP_011186866.1">
    <property type="nucleotide sequence ID" value="NC_006087.1"/>
</dbReference>
<dbReference type="SMR" id="Q6ACL1"/>
<dbReference type="STRING" id="281090.Lxx21970"/>
<dbReference type="KEGG" id="lxx:Lxx21970"/>
<dbReference type="eggNOG" id="COG0137">
    <property type="taxonomic scope" value="Bacteria"/>
</dbReference>
<dbReference type="HOGENOM" id="CLU_032784_4_1_11"/>
<dbReference type="UniPathway" id="UPA00068">
    <property type="reaction ID" value="UER00113"/>
</dbReference>
<dbReference type="Proteomes" id="UP000001306">
    <property type="component" value="Chromosome"/>
</dbReference>
<dbReference type="GO" id="GO:0005737">
    <property type="term" value="C:cytoplasm"/>
    <property type="evidence" value="ECO:0007669"/>
    <property type="project" value="UniProtKB-SubCell"/>
</dbReference>
<dbReference type="GO" id="GO:0004055">
    <property type="term" value="F:argininosuccinate synthase activity"/>
    <property type="evidence" value="ECO:0007669"/>
    <property type="project" value="UniProtKB-UniRule"/>
</dbReference>
<dbReference type="GO" id="GO:0005524">
    <property type="term" value="F:ATP binding"/>
    <property type="evidence" value="ECO:0007669"/>
    <property type="project" value="UniProtKB-UniRule"/>
</dbReference>
<dbReference type="GO" id="GO:0042803">
    <property type="term" value="F:protein homodimerization activity"/>
    <property type="evidence" value="ECO:0007669"/>
    <property type="project" value="InterPro"/>
</dbReference>
<dbReference type="GO" id="GO:0000053">
    <property type="term" value="P:argininosuccinate metabolic process"/>
    <property type="evidence" value="ECO:0007669"/>
    <property type="project" value="TreeGrafter"/>
</dbReference>
<dbReference type="GO" id="GO:0006526">
    <property type="term" value="P:L-arginine biosynthetic process"/>
    <property type="evidence" value="ECO:0007669"/>
    <property type="project" value="UniProtKB-UniRule"/>
</dbReference>
<dbReference type="GO" id="GO:0000050">
    <property type="term" value="P:urea cycle"/>
    <property type="evidence" value="ECO:0007669"/>
    <property type="project" value="TreeGrafter"/>
</dbReference>
<dbReference type="CDD" id="cd01999">
    <property type="entry name" value="ASS"/>
    <property type="match status" value="1"/>
</dbReference>
<dbReference type="Gene3D" id="1.10.287.400">
    <property type="match status" value="1"/>
</dbReference>
<dbReference type="Gene3D" id="3.90.1260.10">
    <property type="entry name" value="Argininosuccinate synthetase, chain A, domain 2"/>
    <property type="match status" value="1"/>
</dbReference>
<dbReference type="Gene3D" id="3.40.50.620">
    <property type="entry name" value="HUPs"/>
    <property type="match status" value="1"/>
</dbReference>
<dbReference type="HAMAP" id="MF_00581">
    <property type="entry name" value="Arg_succ_synth_type2"/>
    <property type="match status" value="1"/>
</dbReference>
<dbReference type="InterPro" id="IPR023437">
    <property type="entry name" value="Arg_succ_synth_type2_subfam"/>
</dbReference>
<dbReference type="InterPro" id="IPR048268">
    <property type="entry name" value="Arginosuc_syn_C"/>
</dbReference>
<dbReference type="InterPro" id="IPR048267">
    <property type="entry name" value="Arginosuc_syn_N"/>
</dbReference>
<dbReference type="InterPro" id="IPR001518">
    <property type="entry name" value="Arginosuc_synth"/>
</dbReference>
<dbReference type="InterPro" id="IPR018223">
    <property type="entry name" value="Arginosuc_synth_CS"/>
</dbReference>
<dbReference type="InterPro" id="IPR023434">
    <property type="entry name" value="Arginosuc_synth_type_1_subfam"/>
</dbReference>
<dbReference type="InterPro" id="IPR024074">
    <property type="entry name" value="AS_cat/multimer_dom_body"/>
</dbReference>
<dbReference type="InterPro" id="IPR024073">
    <property type="entry name" value="AS_multimer_C_tail"/>
</dbReference>
<dbReference type="InterPro" id="IPR014729">
    <property type="entry name" value="Rossmann-like_a/b/a_fold"/>
</dbReference>
<dbReference type="NCBIfam" id="TIGR00032">
    <property type="entry name" value="argG"/>
    <property type="match status" value="1"/>
</dbReference>
<dbReference type="NCBIfam" id="NF003779">
    <property type="entry name" value="PRK05370.1"/>
    <property type="match status" value="1"/>
</dbReference>
<dbReference type="PANTHER" id="PTHR11587">
    <property type="entry name" value="ARGININOSUCCINATE SYNTHASE"/>
    <property type="match status" value="1"/>
</dbReference>
<dbReference type="PANTHER" id="PTHR11587:SF2">
    <property type="entry name" value="ARGININOSUCCINATE SYNTHASE"/>
    <property type="match status" value="1"/>
</dbReference>
<dbReference type="Pfam" id="PF20979">
    <property type="entry name" value="Arginosuc_syn_C"/>
    <property type="match status" value="1"/>
</dbReference>
<dbReference type="Pfam" id="PF00764">
    <property type="entry name" value="Arginosuc_synth"/>
    <property type="match status" value="1"/>
</dbReference>
<dbReference type="SUPFAM" id="SSF52402">
    <property type="entry name" value="Adenine nucleotide alpha hydrolases-like"/>
    <property type="match status" value="1"/>
</dbReference>
<dbReference type="SUPFAM" id="SSF69864">
    <property type="entry name" value="Argininosuccinate synthetase, C-terminal domain"/>
    <property type="match status" value="1"/>
</dbReference>
<dbReference type="PROSITE" id="PS00564">
    <property type="entry name" value="ARGININOSUCCIN_SYN_1"/>
    <property type="match status" value="1"/>
</dbReference>
<dbReference type="PROSITE" id="PS00565">
    <property type="entry name" value="ARGININOSUCCIN_SYN_2"/>
    <property type="match status" value="1"/>
</dbReference>
<keyword id="KW-0028">Amino-acid biosynthesis</keyword>
<keyword id="KW-0055">Arginine biosynthesis</keyword>
<keyword id="KW-0067">ATP-binding</keyword>
<keyword id="KW-0963">Cytoplasm</keyword>
<keyword id="KW-0436">Ligase</keyword>
<keyword id="KW-0547">Nucleotide-binding</keyword>
<keyword id="KW-1185">Reference proteome</keyword>
<reference key="1">
    <citation type="journal article" date="2004" name="Mol. Plant Microbe Interact.">
        <title>The genome sequence of the Gram-positive sugarcane pathogen Leifsonia xyli subsp. xyli.</title>
        <authorList>
            <person name="Monteiro-Vitorello C.B."/>
            <person name="Camargo L.E.A."/>
            <person name="Van Sluys M.A."/>
            <person name="Kitajima J.P."/>
            <person name="Truffi D."/>
            <person name="do Amaral A.M."/>
            <person name="Harakava R."/>
            <person name="de Oliveira J.C.F."/>
            <person name="Wood D."/>
            <person name="de Oliveira M.C."/>
            <person name="Miyaki C.Y."/>
            <person name="Takita M.A."/>
            <person name="da Silva A.C.R."/>
            <person name="Furlan L.R."/>
            <person name="Carraro D.M."/>
            <person name="Camarotte G."/>
            <person name="Almeida N.F. Jr."/>
            <person name="Carrer H."/>
            <person name="Coutinho L.L."/>
            <person name="El-Dorry H.A."/>
            <person name="Ferro M.I.T."/>
            <person name="Gagliardi P.R."/>
            <person name="Giglioti E."/>
            <person name="Goldman M.H.S."/>
            <person name="Goldman G.H."/>
            <person name="Kimura E.T."/>
            <person name="Ferro E.S."/>
            <person name="Kuramae E.E."/>
            <person name="Lemos E.G.M."/>
            <person name="Lemos M.V.F."/>
            <person name="Mauro S.M.Z."/>
            <person name="Machado M.A."/>
            <person name="Marino C.L."/>
            <person name="Menck C.F."/>
            <person name="Nunes L.R."/>
            <person name="Oliveira R.C."/>
            <person name="Pereira G.G."/>
            <person name="Siqueira W."/>
            <person name="de Souza A.A."/>
            <person name="Tsai S.M."/>
            <person name="Zanca A.S."/>
            <person name="Simpson A.J.G."/>
            <person name="Brumbley S.M."/>
            <person name="Setubal J.C."/>
        </authorList>
    </citation>
    <scope>NUCLEOTIDE SEQUENCE [LARGE SCALE GENOMIC DNA]</scope>
    <source>
        <strain>CTCB07</strain>
    </source>
</reference>
<sequence length="478" mass="52261">MSKVLSSLPVGERVGIAFSGGLDTSCAVAWMREKGAVPCAYTADIGQYDEPNIEEVPGRATEYGAEIARLVDAKRALVEEGLIALQCGAFHIRSGGKTYFNTTPLGRAVTGVMLVRAMRDDDVEIWGDGSTYKGNDIERFYRYGLIANPRLRIYKPWLDTAFVEELGGRTEISEWLVARGFPYRDATEKAYSTDANIWGATHEAKRLEELDAGLDIVEPIMGVAAWREDIEVAPETVSVSFEYGRPVALNGIEFADPVALVPEANAIGGRHGLGASDQIENRIIEAKSRGIYEAPGMALLHIAYERLLNAIHNEDTVANYHTEGRRLGRLMYEGRWLDPQSLMLRESLQRWVGSAITGEVTLRLRRGDDYTILDTTGPALSYHPDKLSMERVGNAAFGPADRIGQLTMRNLDIADSRSRLEQYAATGLIGGPTAELVGELQEGSARSILELDVSPEDDALSREIDASSEGAAFDAGTD</sequence>
<name>ASSY_LEIXX</name>
<protein>
    <recommendedName>
        <fullName evidence="1">Argininosuccinate synthase</fullName>
        <ecNumber evidence="1">6.3.4.5</ecNumber>
    </recommendedName>
    <alternativeName>
        <fullName evidence="1">Citrulline--aspartate ligase</fullName>
    </alternativeName>
</protein>